<evidence type="ECO:0000255" key="1">
    <source>
        <dbReference type="HAMAP-Rule" id="MF_00022"/>
    </source>
</evidence>
<reference key="1">
    <citation type="submission" date="2007-06" db="EMBL/GenBank/DDBJ databases">
        <title>Complete sequence of chromosome of Staphylococcus aureus subsp. aureus JH1.</title>
        <authorList>
            <consortium name="US DOE Joint Genome Institute"/>
            <person name="Copeland A."/>
            <person name="Lucas S."/>
            <person name="Lapidus A."/>
            <person name="Barry K."/>
            <person name="Detter J.C."/>
            <person name="Glavina del Rio T."/>
            <person name="Hammon N."/>
            <person name="Israni S."/>
            <person name="Dalin E."/>
            <person name="Tice H."/>
            <person name="Pitluck S."/>
            <person name="Chain P."/>
            <person name="Malfatti S."/>
            <person name="Shin M."/>
            <person name="Vergez L."/>
            <person name="Schmutz J."/>
            <person name="Larimer F."/>
            <person name="Land M."/>
            <person name="Hauser L."/>
            <person name="Kyrpides N."/>
            <person name="Ivanova N."/>
            <person name="Tomasz A."/>
            <person name="Richardson P."/>
        </authorList>
    </citation>
    <scope>NUCLEOTIDE SEQUENCE [LARGE SCALE GENOMIC DNA]</scope>
    <source>
        <strain>JH1</strain>
    </source>
</reference>
<protein>
    <recommendedName>
        <fullName evidence="1">Glutamate--tRNA ligase</fullName>
        <ecNumber evidence="1">6.1.1.17</ecNumber>
    </recommendedName>
    <alternativeName>
        <fullName evidence="1">Glutamyl-tRNA synthetase</fullName>
        <shortName evidence="1">GluRS</shortName>
    </alternativeName>
</protein>
<dbReference type="EC" id="6.1.1.17" evidence="1"/>
<dbReference type="EMBL" id="CP000736">
    <property type="protein sequence ID" value="ABR51422.1"/>
    <property type="molecule type" value="Genomic_DNA"/>
</dbReference>
<dbReference type="SMR" id="A6TZ04"/>
<dbReference type="KEGG" id="sah:SaurJH1_0564"/>
<dbReference type="HOGENOM" id="CLU_015768_6_1_9"/>
<dbReference type="GO" id="GO:0005829">
    <property type="term" value="C:cytosol"/>
    <property type="evidence" value="ECO:0007669"/>
    <property type="project" value="TreeGrafter"/>
</dbReference>
<dbReference type="GO" id="GO:0005524">
    <property type="term" value="F:ATP binding"/>
    <property type="evidence" value="ECO:0007669"/>
    <property type="project" value="UniProtKB-UniRule"/>
</dbReference>
<dbReference type="GO" id="GO:0004818">
    <property type="term" value="F:glutamate-tRNA ligase activity"/>
    <property type="evidence" value="ECO:0007669"/>
    <property type="project" value="UniProtKB-UniRule"/>
</dbReference>
<dbReference type="GO" id="GO:0000049">
    <property type="term" value="F:tRNA binding"/>
    <property type="evidence" value="ECO:0007669"/>
    <property type="project" value="InterPro"/>
</dbReference>
<dbReference type="GO" id="GO:0008270">
    <property type="term" value="F:zinc ion binding"/>
    <property type="evidence" value="ECO:0007669"/>
    <property type="project" value="InterPro"/>
</dbReference>
<dbReference type="GO" id="GO:0006424">
    <property type="term" value="P:glutamyl-tRNA aminoacylation"/>
    <property type="evidence" value="ECO:0007669"/>
    <property type="project" value="UniProtKB-UniRule"/>
</dbReference>
<dbReference type="CDD" id="cd00808">
    <property type="entry name" value="GluRS_core"/>
    <property type="match status" value="1"/>
</dbReference>
<dbReference type="FunFam" id="1.10.10.350:FF:000002">
    <property type="entry name" value="Glutamate--tRNA ligase"/>
    <property type="match status" value="1"/>
</dbReference>
<dbReference type="FunFam" id="3.40.50.620:FF:000007">
    <property type="entry name" value="Glutamate--tRNA ligase"/>
    <property type="match status" value="1"/>
</dbReference>
<dbReference type="Gene3D" id="1.10.10.350">
    <property type="match status" value="1"/>
</dbReference>
<dbReference type="Gene3D" id="3.40.50.620">
    <property type="entry name" value="HUPs"/>
    <property type="match status" value="1"/>
</dbReference>
<dbReference type="HAMAP" id="MF_00022">
    <property type="entry name" value="Glu_tRNA_synth_type1"/>
    <property type="match status" value="1"/>
</dbReference>
<dbReference type="InterPro" id="IPR045462">
    <property type="entry name" value="aa-tRNA-synth_I_cd-bd"/>
</dbReference>
<dbReference type="InterPro" id="IPR020751">
    <property type="entry name" value="aa-tRNA-synth_I_codon-bd_sub2"/>
</dbReference>
<dbReference type="InterPro" id="IPR001412">
    <property type="entry name" value="aa-tRNA-synth_I_CS"/>
</dbReference>
<dbReference type="InterPro" id="IPR008925">
    <property type="entry name" value="aa_tRNA-synth_I_cd-bd_sf"/>
</dbReference>
<dbReference type="InterPro" id="IPR004527">
    <property type="entry name" value="Glu-tRNA-ligase_bac/mito"/>
</dbReference>
<dbReference type="InterPro" id="IPR000924">
    <property type="entry name" value="Glu/Gln-tRNA-synth"/>
</dbReference>
<dbReference type="InterPro" id="IPR020058">
    <property type="entry name" value="Glu/Gln-tRNA-synth_Ib_cat-dom"/>
</dbReference>
<dbReference type="InterPro" id="IPR049940">
    <property type="entry name" value="GluQ/Sye"/>
</dbReference>
<dbReference type="InterPro" id="IPR033910">
    <property type="entry name" value="GluRS_core"/>
</dbReference>
<dbReference type="InterPro" id="IPR014729">
    <property type="entry name" value="Rossmann-like_a/b/a_fold"/>
</dbReference>
<dbReference type="NCBIfam" id="TIGR00464">
    <property type="entry name" value="gltX_bact"/>
    <property type="match status" value="1"/>
</dbReference>
<dbReference type="PANTHER" id="PTHR43311">
    <property type="entry name" value="GLUTAMATE--TRNA LIGASE"/>
    <property type="match status" value="1"/>
</dbReference>
<dbReference type="PANTHER" id="PTHR43311:SF2">
    <property type="entry name" value="GLUTAMATE--TRNA LIGASE, MITOCHONDRIAL-RELATED"/>
    <property type="match status" value="1"/>
</dbReference>
<dbReference type="Pfam" id="PF19269">
    <property type="entry name" value="Anticodon_2"/>
    <property type="match status" value="1"/>
</dbReference>
<dbReference type="Pfam" id="PF00749">
    <property type="entry name" value="tRNA-synt_1c"/>
    <property type="match status" value="1"/>
</dbReference>
<dbReference type="PRINTS" id="PR00987">
    <property type="entry name" value="TRNASYNTHGLU"/>
</dbReference>
<dbReference type="SUPFAM" id="SSF48163">
    <property type="entry name" value="An anticodon-binding domain of class I aminoacyl-tRNA synthetases"/>
    <property type="match status" value="1"/>
</dbReference>
<dbReference type="SUPFAM" id="SSF52374">
    <property type="entry name" value="Nucleotidylyl transferase"/>
    <property type="match status" value="1"/>
</dbReference>
<dbReference type="PROSITE" id="PS00178">
    <property type="entry name" value="AA_TRNA_LIGASE_I"/>
    <property type="match status" value="1"/>
</dbReference>
<gene>
    <name evidence="1" type="primary">gltX</name>
    <name type="ordered locus">SaurJH1_0564</name>
</gene>
<comment type="function">
    <text evidence="1">Catalyzes the attachment of glutamate to tRNA(Glu) in a two-step reaction: glutamate is first activated by ATP to form Glu-AMP and then transferred to the acceptor end of tRNA(Glu).</text>
</comment>
<comment type="catalytic activity">
    <reaction evidence="1">
        <text>tRNA(Glu) + L-glutamate + ATP = L-glutamyl-tRNA(Glu) + AMP + diphosphate</text>
        <dbReference type="Rhea" id="RHEA:23540"/>
        <dbReference type="Rhea" id="RHEA-COMP:9663"/>
        <dbReference type="Rhea" id="RHEA-COMP:9680"/>
        <dbReference type="ChEBI" id="CHEBI:29985"/>
        <dbReference type="ChEBI" id="CHEBI:30616"/>
        <dbReference type="ChEBI" id="CHEBI:33019"/>
        <dbReference type="ChEBI" id="CHEBI:78442"/>
        <dbReference type="ChEBI" id="CHEBI:78520"/>
        <dbReference type="ChEBI" id="CHEBI:456215"/>
        <dbReference type="EC" id="6.1.1.17"/>
    </reaction>
</comment>
<comment type="subunit">
    <text evidence="1">Monomer.</text>
</comment>
<comment type="subcellular location">
    <subcellularLocation>
        <location evidence="1">Cytoplasm</location>
    </subcellularLocation>
</comment>
<comment type="similarity">
    <text evidence="1">Belongs to the class-I aminoacyl-tRNA synthetase family. Glutamate--tRNA ligase type 1 subfamily.</text>
</comment>
<sequence>MSDRIRVRYAPSPTGYLHIGNARTALFNYLYAKHYNGDFVIRIEDTDKKRNLEDGETSQFDNLKWLGLDWDESVDKDNGYGPYRQSERQHIYQPLIDQLLAEDKAYKCYMTEEELEAEREAQIARGEMPRYGGQHAHLTEEQRQQFEAEGRQPSIRFRVPQNQTYSFDDMVKGNISFDSNGIGDWVIVKKDGIPTYNFAVAIDDHYMQISDVIRGDDHISNTPKQIMIYEAFGWEPPRFGHMSLIVNEERKKLSKRDGQILQFIEQYRDLGYLPEALFNFIALLGWSPEGEEEIFSKEEFIKIFDEKRLSKSPAFFDKQKLAWVNNQYMKQKDTETVFQLALPHLIKANLIPEVPSEEDLSWGRKLIALYQKEMSYAGEIVPLSEMFFKEMPALGEEEQQVINGEQVPELMTHLFSKLEALEPFEAAEIKKTIKEVQKETGIKGKQLFMPIRVAVTGQMHGPELPNTIEVLGKEKVLNRLKQYK</sequence>
<feature type="chain" id="PRO_1000074336" description="Glutamate--tRNA ligase">
    <location>
        <begin position="1"/>
        <end position="484"/>
    </location>
</feature>
<feature type="short sequence motif" description="'HIGH' region" evidence="1">
    <location>
        <begin position="11"/>
        <end position="21"/>
    </location>
</feature>
<feature type="short sequence motif" description="'KMSKS' region" evidence="1">
    <location>
        <begin position="252"/>
        <end position="256"/>
    </location>
</feature>
<feature type="binding site" evidence="1">
    <location>
        <position position="255"/>
    </location>
    <ligand>
        <name>ATP</name>
        <dbReference type="ChEBI" id="CHEBI:30616"/>
    </ligand>
</feature>
<organism>
    <name type="scientific">Staphylococcus aureus (strain JH1)</name>
    <dbReference type="NCBI Taxonomy" id="359787"/>
    <lineage>
        <taxon>Bacteria</taxon>
        <taxon>Bacillati</taxon>
        <taxon>Bacillota</taxon>
        <taxon>Bacilli</taxon>
        <taxon>Bacillales</taxon>
        <taxon>Staphylococcaceae</taxon>
        <taxon>Staphylococcus</taxon>
    </lineage>
</organism>
<keyword id="KW-0030">Aminoacyl-tRNA synthetase</keyword>
<keyword id="KW-0067">ATP-binding</keyword>
<keyword id="KW-0963">Cytoplasm</keyword>
<keyword id="KW-0436">Ligase</keyword>
<keyword id="KW-0547">Nucleotide-binding</keyword>
<keyword id="KW-0648">Protein biosynthesis</keyword>
<accession>A6TZ04</accession>
<name>SYE_STAA2</name>
<proteinExistence type="inferred from homology"/>